<keyword id="KW-1185">Reference proteome</keyword>
<feature type="chain" id="PRO_0000116345" description="Uncharacterized gene 41 protein">
    <location>
        <begin position="1"/>
        <end position="161"/>
    </location>
</feature>
<dbReference type="EMBL" id="X64346">
    <property type="protein sequence ID" value="CAA45664.1"/>
    <property type="molecule type" value="Genomic_DNA"/>
</dbReference>
<dbReference type="RefSeq" id="NP_040243.1">
    <property type="nucleotide sequence ID" value="NC_001350.1"/>
</dbReference>
<dbReference type="KEGG" id="vg:1682517"/>
<dbReference type="Proteomes" id="UP000000587">
    <property type="component" value="Segment"/>
</dbReference>
<dbReference type="InterPro" id="IPR008650">
    <property type="entry name" value="Helicase-primas_cplx_Herpesvir"/>
</dbReference>
<dbReference type="Pfam" id="PF05774">
    <property type="entry name" value="Herpes_heli_pri"/>
    <property type="match status" value="1"/>
</dbReference>
<name>VG41_SHV21</name>
<proteinExistence type="predicted"/>
<organismHost>
    <name type="scientific">Saimiri sciureus</name>
    <name type="common">Common squirrel monkey</name>
    <dbReference type="NCBI Taxonomy" id="9521"/>
</organismHost>
<organism>
    <name type="scientific">Saimiriine herpesvirus 2 (strain 11)</name>
    <name type="common">SaHV-2</name>
    <name type="synonym">Herpesvirus saimiri</name>
    <dbReference type="NCBI Taxonomy" id="10383"/>
    <lineage>
        <taxon>Viruses</taxon>
        <taxon>Duplodnaviria</taxon>
        <taxon>Heunggongvirae</taxon>
        <taxon>Peploviricota</taxon>
        <taxon>Herviviricetes</taxon>
        <taxon>Herpesvirales</taxon>
        <taxon>Orthoherpesviridae</taxon>
        <taxon>Gammaherpesvirinae</taxon>
        <taxon>Rhadinovirus</taxon>
        <taxon>Rhadinovirus saimiriinegamma2</taxon>
        <taxon>Saimiriine herpesvirus 2</taxon>
    </lineage>
</organism>
<reference key="1">
    <citation type="journal article" date="1992" name="J. Virol.">
        <title>Primary structure of the herpesvirus saimiri genome.</title>
        <authorList>
            <person name="Albrecht J.-C."/>
            <person name="Nicholas J."/>
            <person name="Biller D."/>
            <person name="Cameron K.R."/>
            <person name="Biesinger B."/>
            <person name="Newman C."/>
            <person name="Wittmann S."/>
            <person name="Craxton M.A."/>
            <person name="Coleman H."/>
            <person name="Fleckenstein B."/>
            <person name="Honess R.W."/>
        </authorList>
    </citation>
    <scope>NUCLEOTIDE SEQUENCE [LARGE SCALE GENOMIC DNA]</scope>
</reference>
<protein>
    <recommendedName>
        <fullName>Uncharacterized gene 41 protein</fullName>
    </recommendedName>
</protein>
<gene>
    <name type="primary">41</name>
</gene>
<accession>Q01027</accession>
<sequence length="161" mass="18722">MMTSEASLFLQTPQHLFCGFETCHLTSDPLQTHSWLESVQFGLNILLCTKCNQSICDVLETLLQLYFKNRHNAKFWLVPQHFLTSKPQKPNIPSDCVAPTLFFFTTDGPLCWHQKLNVPLNINYEEYIHKAITVFEKVPSLTINKDMYIKIESWKNILCLL</sequence>